<name>RLA25_ARATH</name>
<evidence type="ECO:0000250" key="1"/>
<evidence type="ECO:0000250" key="2">
    <source>
        <dbReference type="UniProtKB" id="Q9LH85"/>
    </source>
</evidence>
<evidence type="ECO:0000256" key="3">
    <source>
        <dbReference type="SAM" id="MobiDB-lite"/>
    </source>
</evidence>
<evidence type="ECO:0000303" key="4">
    <source>
    </source>
</evidence>
<evidence type="ECO:0000305" key="5"/>
<gene>
    <name type="primary">RPP2E</name>
    <name type="ordered locus">At5g40040</name>
    <name type="ORF">MUD12.2</name>
</gene>
<protein>
    <recommendedName>
        <fullName evidence="4">Large ribosomal subunit protein P2v</fullName>
    </recommendedName>
    <alternativeName>
        <fullName>60S acidic ribosomal protein P2-5</fullName>
    </alternativeName>
</protein>
<feature type="chain" id="PRO_0000245778" description="Large ribosomal subunit protein P2v">
    <location>
        <begin position="1"/>
        <end position="114"/>
    </location>
</feature>
<feature type="region of interest" description="Disordered" evidence="3">
    <location>
        <begin position="74"/>
        <end position="114"/>
    </location>
</feature>
<feature type="modified residue" description="Phosphoserine" evidence="2">
    <location>
        <position position="103"/>
    </location>
</feature>
<proteinExistence type="inferred from homology"/>
<reference key="1">
    <citation type="journal article" date="2000" name="DNA Res.">
        <title>Structural analysis of Arabidopsis thaliana chromosome 5. X. Sequence features of the regions of 3,076,755 bp covered by sixty P1 and TAC clones.</title>
        <authorList>
            <person name="Sato S."/>
            <person name="Nakamura Y."/>
            <person name="Kaneko T."/>
            <person name="Katoh T."/>
            <person name="Asamizu E."/>
            <person name="Kotani H."/>
            <person name="Tabata S."/>
        </authorList>
    </citation>
    <scope>NUCLEOTIDE SEQUENCE [LARGE SCALE GENOMIC DNA]</scope>
    <source>
        <strain>cv. Columbia</strain>
    </source>
</reference>
<reference key="2">
    <citation type="journal article" date="2017" name="Plant J.">
        <title>Araport11: a complete reannotation of the Arabidopsis thaliana reference genome.</title>
        <authorList>
            <person name="Cheng C.Y."/>
            <person name="Krishnakumar V."/>
            <person name="Chan A.P."/>
            <person name="Thibaud-Nissen F."/>
            <person name="Schobel S."/>
            <person name="Town C.D."/>
        </authorList>
    </citation>
    <scope>GENOME REANNOTATION</scope>
    <source>
        <strain>cv. Columbia</strain>
    </source>
</reference>
<reference key="3">
    <citation type="journal article" date="2003" name="Science">
        <title>Empirical analysis of transcriptional activity in the Arabidopsis genome.</title>
        <authorList>
            <person name="Yamada K."/>
            <person name="Lim J."/>
            <person name="Dale J.M."/>
            <person name="Chen H."/>
            <person name="Shinn P."/>
            <person name="Palm C.J."/>
            <person name="Southwick A.M."/>
            <person name="Wu H.C."/>
            <person name="Kim C.J."/>
            <person name="Nguyen M."/>
            <person name="Pham P.K."/>
            <person name="Cheuk R.F."/>
            <person name="Karlin-Newmann G."/>
            <person name="Liu S.X."/>
            <person name="Lam B."/>
            <person name="Sakano H."/>
            <person name="Wu T."/>
            <person name="Yu G."/>
            <person name="Miranda M."/>
            <person name="Quach H.L."/>
            <person name="Tripp M."/>
            <person name="Chang C.H."/>
            <person name="Lee J.M."/>
            <person name="Toriumi M.J."/>
            <person name="Chan M.M."/>
            <person name="Tang C.C."/>
            <person name="Onodera C.S."/>
            <person name="Deng J.M."/>
            <person name="Akiyama K."/>
            <person name="Ansari Y."/>
            <person name="Arakawa T."/>
            <person name="Banh J."/>
            <person name="Banno F."/>
            <person name="Bowser L."/>
            <person name="Brooks S.Y."/>
            <person name="Carninci P."/>
            <person name="Chao Q."/>
            <person name="Choy N."/>
            <person name="Enju A."/>
            <person name="Goldsmith A.D."/>
            <person name="Gurjal M."/>
            <person name="Hansen N.F."/>
            <person name="Hayashizaki Y."/>
            <person name="Johnson-Hopson C."/>
            <person name="Hsuan V.W."/>
            <person name="Iida K."/>
            <person name="Karnes M."/>
            <person name="Khan S."/>
            <person name="Koesema E."/>
            <person name="Ishida J."/>
            <person name="Jiang P.X."/>
            <person name="Jones T."/>
            <person name="Kawai J."/>
            <person name="Kamiya A."/>
            <person name="Meyers C."/>
            <person name="Nakajima M."/>
            <person name="Narusaka M."/>
            <person name="Seki M."/>
            <person name="Sakurai T."/>
            <person name="Satou M."/>
            <person name="Tamse R."/>
            <person name="Vaysberg M."/>
            <person name="Wallender E.K."/>
            <person name="Wong C."/>
            <person name="Yamamura Y."/>
            <person name="Yuan S."/>
            <person name="Shinozaki K."/>
            <person name="Davis R.W."/>
            <person name="Theologis A."/>
            <person name="Ecker J.R."/>
        </authorList>
    </citation>
    <scope>NUCLEOTIDE SEQUENCE [LARGE SCALE MRNA]</scope>
    <source>
        <strain>cv. Columbia</strain>
    </source>
</reference>
<reference key="4">
    <citation type="submission" date="2004-09" db="EMBL/GenBank/DDBJ databases">
        <title>Large-scale analysis of RIKEN Arabidopsis full-length (RAFL) cDNAs.</title>
        <authorList>
            <person name="Totoki Y."/>
            <person name="Seki M."/>
            <person name="Ishida J."/>
            <person name="Nakajima M."/>
            <person name="Enju A."/>
            <person name="Kamiya A."/>
            <person name="Narusaka M."/>
            <person name="Shin-i T."/>
            <person name="Nakagawa M."/>
            <person name="Sakamoto N."/>
            <person name="Oishi K."/>
            <person name="Kohara Y."/>
            <person name="Kobayashi M."/>
            <person name="Toyoda A."/>
            <person name="Sakaki Y."/>
            <person name="Sakurai T."/>
            <person name="Iida K."/>
            <person name="Akiyama K."/>
            <person name="Satou M."/>
            <person name="Toyoda T."/>
            <person name="Konagaya A."/>
            <person name="Carninci P."/>
            <person name="Kawai J."/>
            <person name="Hayashizaki Y."/>
            <person name="Shinozaki K."/>
        </authorList>
    </citation>
    <scope>NUCLEOTIDE SEQUENCE [LARGE SCALE MRNA]</scope>
    <source>
        <strain>cv. Columbia</strain>
    </source>
</reference>
<reference key="5">
    <citation type="journal article" date="2001" name="Plant Physiol.">
        <title>The organization of cytoplasmic ribosomal protein genes in the Arabidopsis genome.</title>
        <authorList>
            <person name="Barakat A."/>
            <person name="Szick-Miranda K."/>
            <person name="Chang I.-F."/>
            <person name="Guyot R."/>
            <person name="Blanc G."/>
            <person name="Cooke R."/>
            <person name="Delseny M."/>
            <person name="Bailey-Serres J."/>
        </authorList>
    </citation>
    <scope>GENE FAMILY ORGANIZATION</scope>
    <scope>NOMENCLATURE</scope>
</reference>
<reference key="6">
    <citation type="journal article" date="2023" name="Plant Cell">
        <title>An updated nomenclature for plant ribosomal protein genes.</title>
        <authorList>
            <person name="Scarpin M.R."/>
            <person name="Busche M."/>
            <person name="Martinez R.E."/>
            <person name="Harper L.C."/>
            <person name="Reiser L."/>
            <person name="Szakonyi D."/>
            <person name="Merchante C."/>
            <person name="Lan T."/>
            <person name="Xiong W."/>
            <person name="Mo B."/>
            <person name="Tang G."/>
            <person name="Chen X."/>
            <person name="Bailey-Serres J."/>
            <person name="Browning K.S."/>
            <person name="Brunkard J.O."/>
        </authorList>
    </citation>
    <scope>NOMENCLATURE</scope>
</reference>
<sequence length="114" mass="11759">MKVVAAYLLAKLSGNENPSVADLKKIVESVGAEIDQEKIDLFFSLIKDRDVTELIAVGREKMAALSSGGGAVAVASGGGGGAAPAAEPASVESKKKEEEKEESEDDGGMMSLFD</sequence>
<comment type="function">
    <text evidence="1">Plays an important role in the elongation step of protein synthesis.</text>
</comment>
<comment type="subunit">
    <text>P1 and P2 exist as dimers at the large ribosomal subunit.</text>
</comment>
<comment type="PTM">
    <text evidence="1">Phosphorylated.</text>
</comment>
<comment type="similarity">
    <text evidence="5">Belongs to the eukaryotic ribosomal protein P1/P2 family.</text>
</comment>
<dbReference type="EMBL" id="AB022222">
    <property type="protein sequence ID" value="BAA97352.1"/>
    <property type="molecule type" value="Genomic_DNA"/>
</dbReference>
<dbReference type="EMBL" id="CP002688">
    <property type="protein sequence ID" value="AED94504.1"/>
    <property type="molecule type" value="Genomic_DNA"/>
</dbReference>
<dbReference type="EMBL" id="BT010520">
    <property type="protein sequence ID" value="AAQ65143.1"/>
    <property type="molecule type" value="mRNA"/>
</dbReference>
<dbReference type="EMBL" id="AK175632">
    <property type="protein sequence ID" value="BAD43395.1"/>
    <property type="molecule type" value="mRNA"/>
</dbReference>
<dbReference type="EMBL" id="AK175633">
    <property type="protein sequence ID" value="BAD43396.1"/>
    <property type="molecule type" value="mRNA"/>
</dbReference>
<dbReference type="EMBL" id="AK175884">
    <property type="protein sequence ID" value="BAD43647.1"/>
    <property type="molecule type" value="mRNA"/>
</dbReference>
<dbReference type="EMBL" id="AK176151">
    <property type="protein sequence ID" value="BAD43914.1"/>
    <property type="molecule type" value="mRNA"/>
</dbReference>
<dbReference type="RefSeq" id="NP_198820.1">
    <property type="nucleotide sequence ID" value="NM_123367.3"/>
</dbReference>
<dbReference type="SMR" id="Q9LUK2"/>
<dbReference type="FunCoup" id="Q9LUK2">
    <property type="interactions" value="45"/>
</dbReference>
<dbReference type="STRING" id="3702.Q9LUK2"/>
<dbReference type="iPTMnet" id="Q9LUK2"/>
<dbReference type="PaxDb" id="3702-AT5G40040.1"/>
<dbReference type="ProteomicsDB" id="228019"/>
<dbReference type="EnsemblPlants" id="AT5G40040.1">
    <property type="protein sequence ID" value="AT5G40040.1"/>
    <property type="gene ID" value="AT5G40040"/>
</dbReference>
<dbReference type="GeneID" id="834001"/>
<dbReference type="Gramene" id="AT5G40040.1">
    <property type="protein sequence ID" value="AT5G40040.1"/>
    <property type="gene ID" value="AT5G40040"/>
</dbReference>
<dbReference type="KEGG" id="ath:AT5G40040"/>
<dbReference type="Araport" id="AT5G40040"/>
<dbReference type="TAIR" id="AT5G40040"/>
<dbReference type="eggNOG" id="KOG3449">
    <property type="taxonomic scope" value="Eukaryota"/>
</dbReference>
<dbReference type="HOGENOM" id="CLU_114656_0_2_1"/>
<dbReference type="InParanoid" id="Q9LUK2"/>
<dbReference type="OrthoDB" id="1227494at2759"/>
<dbReference type="PhylomeDB" id="Q9LUK2"/>
<dbReference type="PRO" id="PR:Q9LUK2"/>
<dbReference type="Proteomes" id="UP000006548">
    <property type="component" value="Chromosome 5"/>
</dbReference>
<dbReference type="ExpressionAtlas" id="Q9LUK2">
    <property type="expression patterns" value="baseline and differential"/>
</dbReference>
<dbReference type="GO" id="GO:0022625">
    <property type="term" value="C:cytosolic large ribosomal subunit"/>
    <property type="evidence" value="ECO:0007669"/>
    <property type="project" value="InterPro"/>
</dbReference>
<dbReference type="GO" id="GO:0022626">
    <property type="term" value="C:cytosolic ribosome"/>
    <property type="evidence" value="ECO:0007005"/>
    <property type="project" value="TAIR"/>
</dbReference>
<dbReference type="GO" id="GO:0003735">
    <property type="term" value="F:structural constituent of ribosome"/>
    <property type="evidence" value="ECO:0000314"/>
    <property type="project" value="CAFA"/>
</dbReference>
<dbReference type="GO" id="GO:0002182">
    <property type="term" value="P:cytoplasmic translational elongation"/>
    <property type="evidence" value="ECO:0007669"/>
    <property type="project" value="InterPro"/>
</dbReference>
<dbReference type="CDD" id="cd05833">
    <property type="entry name" value="Ribosomal_P2"/>
    <property type="match status" value="1"/>
</dbReference>
<dbReference type="FunFam" id="1.10.10.1410:FF:000002">
    <property type="entry name" value="60S acidic ribosomal protein P2"/>
    <property type="match status" value="1"/>
</dbReference>
<dbReference type="Gene3D" id="1.10.10.1410">
    <property type="match status" value="1"/>
</dbReference>
<dbReference type="HAMAP" id="MF_01478">
    <property type="entry name" value="Ribosomal_L12_arch"/>
    <property type="match status" value="1"/>
</dbReference>
<dbReference type="InterPro" id="IPR038716">
    <property type="entry name" value="P1/P2_N_sf"/>
</dbReference>
<dbReference type="InterPro" id="IPR027534">
    <property type="entry name" value="Ribosomal_P1/P2"/>
</dbReference>
<dbReference type="InterPro" id="IPR044076">
    <property type="entry name" value="Ribosomal_P2"/>
</dbReference>
<dbReference type="PANTHER" id="PTHR21141">
    <property type="entry name" value="60S ACIDIC RIBOSOMAL PROTEIN FAMILY MEMBER"/>
    <property type="match status" value="1"/>
</dbReference>
<dbReference type="PANTHER" id="PTHR21141:SF112">
    <property type="entry name" value="LARGE RIBOSOMAL SUBUNIT PROTEIN P2V"/>
    <property type="match status" value="1"/>
</dbReference>
<dbReference type="Pfam" id="PF00428">
    <property type="entry name" value="Ribosomal_60s"/>
    <property type="match status" value="1"/>
</dbReference>
<accession>Q9LUK2</accession>
<keyword id="KW-0597">Phosphoprotein</keyword>
<keyword id="KW-1185">Reference proteome</keyword>
<keyword id="KW-0687">Ribonucleoprotein</keyword>
<keyword id="KW-0689">Ribosomal protein</keyword>
<organism>
    <name type="scientific">Arabidopsis thaliana</name>
    <name type="common">Mouse-ear cress</name>
    <dbReference type="NCBI Taxonomy" id="3702"/>
    <lineage>
        <taxon>Eukaryota</taxon>
        <taxon>Viridiplantae</taxon>
        <taxon>Streptophyta</taxon>
        <taxon>Embryophyta</taxon>
        <taxon>Tracheophyta</taxon>
        <taxon>Spermatophyta</taxon>
        <taxon>Magnoliopsida</taxon>
        <taxon>eudicotyledons</taxon>
        <taxon>Gunneridae</taxon>
        <taxon>Pentapetalae</taxon>
        <taxon>rosids</taxon>
        <taxon>malvids</taxon>
        <taxon>Brassicales</taxon>
        <taxon>Brassicaceae</taxon>
        <taxon>Camelineae</taxon>
        <taxon>Arabidopsis</taxon>
    </lineage>
</organism>